<accession>A6QET9</accession>
<keyword id="KW-0050">Antiport</keyword>
<keyword id="KW-1003">Cell membrane</keyword>
<keyword id="KW-0406">Ion transport</keyword>
<keyword id="KW-0472">Membrane</keyword>
<keyword id="KW-0812">Transmembrane</keyword>
<keyword id="KW-1133">Transmembrane helix</keyword>
<keyword id="KW-0813">Transport</keyword>
<organism>
    <name type="scientific">Staphylococcus aureus (strain Newman)</name>
    <dbReference type="NCBI Taxonomy" id="426430"/>
    <lineage>
        <taxon>Bacteria</taxon>
        <taxon>Bacillati</taxon>
        <taxon>Bacillota</taxon>
        <taxon>Bacilli</taxon>
        <taxon>Bacillales</taxon>
        <taxon>Staphylococcaceae</taxon>
        <taxon>Staphylococcus</taxon>
    </lineage>
</organism>
<sequence>MEITKEIFSLIAAVMLLLGSFIALISAIGIVKFQDVFLRSHAATKSSTLSVLLTLIGVLIYFIVNTGFFSVRLLLSLVFINLTSPVGMHLVARAAYRNGAYMYRKNDAHTHASILLSSNEQNSTEALQLRAEKREEHRKKWYQND</sequence>
<name>MNHG2_STAAE</name>
<gene>
    <name type="primary">mnhG2</name>
    <name type="synonym">mrpG2</name>
    <name type="ordered locus">NWMN_0599</name>
</gene>
<proteinExistence type="inferred from homology"/>
<protein>
    <recommendedName>
        <fullName>Putative antiporter subunit mnhG2</fullName>
    </recommendedName>
    <alternativeName>
        <fullName>Mrp complex subunit G2</fullName>
    </alternativeName>
    <alternativeName>
        <fullName>Putative NADH-ubiquinone oxidoreductase subunit mnhF2</fullName>
    </alternativeName>
</protein>
<evidence type="ECO:0000250" key="1"/>
<evidence type="ECO:0000255" key="2"/>
<evidence type="ECO:0000305" key="3"/>
<dbReference type="EMBL" id="AP009351">
    <property type="protein sequence ID" value="BAF66871.1"/>
    <property type="status" value="ALT_INIT"/>
    <property type="molecule type" value="Genomic_DNA"/>
</dbReference>
<dbReference type="RefSeq" id="WP_000406611.1">
    <property type="nucleotide sequence ID" value="NZ_JBBIAE010000002.1"/>
</dbReference>
<dbReference type="SMR" id="A6QET9"/>
<dbReference type="KEGG" id="sae:NWMN_0599"/>
<dbReference type="HOGENOM" id="CLU_121334_0_3_9"/>
<dbReference type="Proteomes" id="UP000006386">
    <property type="component" value="Chromosome"/>
</dbReference>
<dbReference type="GO" id="GO:0005886">
    <property type="term" value="C:plasma membrane"/>
    <property type="evidence" value="ECO:0007669"/>
    <property type="project" value="UniProtKB-SubCell"/>
</dbReference>
<dbReference type="GO" id="GO:0015385">
    <property type="term" value="F:sodium:proton antiporter activity"/>
    <property type="evidence" value="ECO:0007669"/>
    <property type="project" value="TreeGrafter"/>
</dbReference>
<dbReference type="InterPro" id="IPR005133">
    <property type="entry name" value="PhaG_MnhG_YufB"/>
</dbReference>
<dbReference type="NCBIfam" id="TIGR01300">
    <property type="entry name" value="CPA3_mnhG_phaG"/>
    <property type="match status" value="1"/>
</dbReference>
<dbReference type="NCBIfam" id="NF009236">
    <property type="entry name" value="PRK12586.1"/>
    <property type="match status" value="1"/>
</dbReference>
<dbReference type="NCBIfam" id="NF009314">
    <property type="entry name" value="PRK12674.1-2"/>
    <property type="match status" value="1"/>
</dbReference>
<dbReference type="PANTHER" id="PTHR34703">
    <property type="entry name" value="ANTIPORTER SUBUNIT MNHG2-RELATED"/>
    <property type="match status" value="1"/>
</dbReference>
<dbReference type="PANTHER" id="PTHR34703:SF1">
    <property type="entry name" value="ANTIPORTER SUBUNIT MNHG2-RELATED"/>
    <property type="match status" value="1"/>
</dbReference>
<dbReference type="Pfam" id="PF03334">
    <property type="entry name" value="PhaG_MnhG_YufB"/>
    <property type="match status" value="1"/>
</dbReference>
<comment type="subunit">
    <text evidence="1">May form a heterooligomeric complex that consists of seven subunits: mnhA2, mnhB2, mnhC2, mnhD2, mnhE2, mnhF2 and mnhG2.</text>
</comment>
<comment type="subcellular location">
    <subcellularLocation>
        <location evidence="3">Cell membrane</location>
        <topology evidence="3">Multi-pass membrane protein</topology>
    </subcellularLocation>
</comment>
<comment type="similarity">
    <text evidence="3">Belongs to the CPA3 antiporters (TC 2.A.63) subunit G family.</text>
</comment>
<comment type="sequence caution" evidence="3">
    <conflict type="erroneous initiation">
        <sequence resource="EMBL-CDS" id="BAF66871"/>
    </conflict>
</comment>
<feature type="chain" id="PRO_0000372183" description="Putative antiporter subunit mnhG2">
    <location>
        <begin position="1"/>
        <end position="145"/>
    </location>
</feature>
<feature type="transmembrane region" description="Helical" evidence="2">
    <location>
        <begin position="11"/>
        <end position="31"/>
    </location>
</feature>
<feature type="transmembrane region" description="Helical" evidence="2">
    <location>
        <begin position="51"/>
        <end position="71"/>
    </location>
</feature>
<feature type="transmembrane region" description="Helical" evidence="2">
    <location>
        <begin position="72"/>
        <end position="92"/>
    </location>
</feature>
<reference key="1">
    <citation type="journal article" date="2008" name="J. Bacteriol.">
        <title>Genome sequence of Staphylococcus aureus strain Newman and comparative analysis of staphylococcal genomes: polymorphism and evolution of two major pathogenicity islands.</title>
        <authorList>
            <person name="Baba T."/>
            <person name="Bae T."/>
            <person name="Schneewind O."/>
            <person name="Takeuchi F."/>
            <person name="Hiramatsu K."/>
        </authorList>
    </citation>
    <scope>NUCLEOTIDE SEQUENCE [LARGE SCALE GENOMIC DNA]</scope>
    <source>
        <strain>Newman</strain>
    </source>
</reference>